<organism>
    <name type="scientific">Mycobacterium bovis (strain BCG / Pasteur 1173P2)</name>
    <dbReference type="NCBI Taxonomy" id="410289"/>
    <lineage>
        <taxon>Bacteria</taxon>
        <taxon>Bacillati</taxon>
        <taxon>Actinomycetota</taxon>
        <taxon>Actinomycetes</taxon>
        <taxon>Mycobacteriales</taxon>
        <taxon>Mycobacteriaceae</taxon>
        <taxon>Mycobacterium</taxon>
        <taxon>Mycobacterium tuberculosis complex</taxon>
    </lineage>
</organism>
<name>PRP_MYCBP</name>
<feature type="chain" id="PRO_0000097049" description="Proline-rich protein">
    <location>
        <begin position="1"/>
        <end position="15" status="greater than"/>
    </location>
</feature>
<feature type="non-terminal residue">
    <location>
        <position position="15"/>
    </location>
</feature>
<sequence>TPPXEXPPPPQXVXL</sequence>
<protein>
    <recommendedName>
        <fullName>Proline-rich protein</fullName>
    </recommendedName>
</protein>
<keyword id="KW-0903">Direct protein sequencing</keyword>
<keyword id="KW-0964">Secreted</keyword>
<comment type="subcellular location">
    <subcellularLocation>
        <location>Secreted</location>
    </subcellularLocation>
</comment>
<comment type="miscellaneous">
    <text>Immunodominant for delayed-type hypersensitivity reactions in guinea pigs.</text>
</comment>
<accession>P80149</accession>
<reference key="1">
    <citation type="journal article" date="1993" name="Proc. Natl. Acad. Sci. U.S.A.">
        <title>Isolation of a proline-rich mycobacterial protein eliciting delayed-type hypersensitivity reactions only in guinea pigs immunized with living mycobacteria.</title>
        <authorList>
            <person name="Romain F."/>
            <person name="Augier J."/>
            <person name="Pescher P."/>
            <person name="Marchal G.A."/>
        </authorList>
    </citation>
    <scope>PROTEIN SEQUENCE</scope>
</reference>
<proteinExistence type="evidence at protein level"/>
<dbReference type="GO" id="GO:0005576">
    <property type="term" value="C:extracellular region"/>
    <property type="evidence" value="ECO:0007669"/>
    <property type="project" value="UniProtKB-SubCell"/>
</dbReference>